<protein>
    <recommendedName>
        <fullName evidence="1">Bifunctional purine biosynthesis protein PurH</fullName>
    </recommendedName>
    <domain>
        <recommendedName>
            <fullName evidence="1">Phosphoribosylaminoimidazolecarboxamide formyltransferase</fullName>
            <ecNumber evidence="1">2.1.2.3</ecNumber>
        </recommendedName>
        <alternativeName>
            <fullName evidence="1">AICAR transformylase</fullName>
        </alternativeName>
    </domain>
    <domain>
        <recommendedName>
            <fullName evidence="1">IMP cyclohydrolase</fullName>
            <ecNumber evidence="1">3.5.4.10</ecNumber>
        </recommendedName>
        <alternativeName>
            <fullName evidence="1">ATIC</fullName>
        </alternativeName>
        <alternativeName>
            <fullName evidence="1">IMP synthase</fullName>
        </alternativeName>
        <alternativeName>
            <fullName evidence="1">Inosinicase</fullName>
        </alternativeName>
    </domain>
</protein>
<keyword id="KW-0378">Hydrolase</keyword>
<keyword id="KW-0511">Multifunctional enzyme</keyword>
<keyword id="KW-0658">Purine biosynthesis</keyword>
<keyword id="KW-0808">Transferase</keyword>
<gene>
    <name evidence="1" type="primary">purH</name>
    <name type="ordered locus">XAC0513</name>
</gene>
<proteinExistence type="inferred from homology"/>
<name>PUR9_XANAC</name>
<evidence type="ECO:0000255" key="1">
    <source>
        <dbReference type="HAMAP-Rule" id="MF_00139"/>
    </source>
</evidence>
<evidence type="ECO:0000255" key="2">
    <source>
        <dbReference type="PROSITE-ProRule" id="PRU01202"/>
    </source>
</evidence>
<organism>
    <name type="scientific">Xanthomonas axonopodis pv. citri (strain 306)</name>
    <dbReference type="NCBI Taxonomy" id="190486"/>
    <lineage>
        <taxon>Bacteria</taxon>
        <taxon>Pseudomonadati</taxon>
        <taxon>Pseudomonadota</taxon>
        <taxon>Gammaproteobacteria</taxon>
        <taxon>Lysobacterales</taxon>
        <taxon>Lysobacteraceae</taxon>
        <taxon>Xanthomonas</taxon>
    </lineage>
</organism>
<comment type="catalytic activity">
    <reaction evidence="1">
        <text>(6R)-10-formyltetrahydrofolate + 5-amino-1-(5-phospho-beta-D-ribosyl)imidazole-4-carboxamide = 5-formamido-1-(5-phospho-D-ribosyl)imidazole-4-carboxamide + (6S)-5,6,7,8-tetrahydrofolate</text>
        <dbReference type="Rhea" id="RHEA:22192"/>
        <dbReference type="ChEBI" id="CHEBI:57453"/>
        <dbReference type="ChEBI" id="CHEBI:58467"/>
        <dbReference type="ChEBI" id="CHEBI:58475"/>
        <dbReference type="ChEBI" id="CHEBI:195366"/>
        <dbReference type="EC" id="2.1.2.3"/>
    </reaction>
</comment>
<comment type="catalytic activity">
    <reaction evidence="1">
        <text>IMP + H2O = 5-formamido-1-(5-phospho-D-ribosyl)imidazole-4-carboxamide</text>
        <dbReference type="Rhea" id="RHEA:18445"/>
        <dbReference type="ChEBI" id="CHEBI:15377"/>
        <dbReference type="ChEBI" id="CHEBI:58053"/>
        <dbReference type="ChEBI" id="CHEBI:58467"/>
        <dbReference type="EC" id="3.5.4.10"/>
    </reaction>
</comment>
<comment type="pathway">
    <text evidence="1">Purine metabolism; IMP biosynthesis via de novo pathway; 5-formamido-1-(5-phospho-D-ribosyl)imidazole-4-carboxamide from 5-amino-1-(5-phospho-D-ribosyl)imidazole-4-carboxamide (10-formyl THF route): step 1/1.</text>
</comment>
<comment type="pathway">
    <text evidence="1">Purine metabolism; IMP biosynthesis via de novo pathway; IMP from 5-formamido-1-(5-phospho-D-ribosyl)imidazole-4-carboxamide: step 1/1.</text>
</comment>
<comment type="domain">
    <text evidence="1">The IMP cyclohydrolase activity resides in the N-terminal region.</text>
</comment>
<comment type="similarity">
    <text evidence="1">Belongs to the PurH family.</text>
</comment>
<accession>Q8PQ19</accession>
<dbReference type="EC" id="2.1.2.3" evidence="1"/>
<dbReference type="EC" id="3.5.4.10" evidence="1"/>
<dbReference type="EMBL" id="AE008923">
    <property type="protein sequence ID" value="AAM35402.1"/>
    <property type="molecule type" value="Genomic_DNA"/>
</dbReference>
<dbReference type="RefSeq" id="WP_011050360.1">
    <property type="nucleotide sequence ID" value="NC_003919.1"/>
</dbReference>
<dbReference type="SMR" id="Q8PQ19"/>
<dbReference type="GeneID" id="66909719"/>
<dbReference type="KEGG" id="xac:XAC0513"/>
<dbReference type="eggNOG" id="COG0138">
    <property type="taxonomic scope" value="Bacteria"/>
</dbReference>
<dbReference type="HOGENOM" id="CLU_016316_5_2_6"/>
<dbReference type="UniPathway" id="UPA00074">
    <property type="reaction ID" value="UER00133"/>
</dbReference>
<dbReference type="UniPathway" id="UPA00074">
    <property type="reaction ID" value="UER00135"/>
</dbReference>
<dbReference type="Proteomes" id="UP000000576">
    <property type="component" value="Chromosome"/>
</dbReference>
<dbReference type="GO" id="GO:0005829">
    <property type="term" value="C:cytosol"/>
    <property type="evidence" value="ECO:0007669"/>
    <property type="project" value="TreeGrafter"/>
</dbReference>
<dbReference type="GO" id="GO:0003937">
    <property type="term" value="F:IMP cyclohydrolase activity"/>
    <property type="evidence" value="ECO:0007669"/>
    <property type="project" value="UniProtKB-UniRule"/>
</dbReference>
<dbReference type="GO" id="GO:0004643">
    <property type="term" value="F:phosphoribosylaminoimidazolecarboxamide formyltransferase activity"/>
    <property type="evidence" value="ECO:0007669"/>
    <property type="project" value="UniProtKB-UniRule"/>
</dbReference>
<dbReference type="GO" id="GO:0006189">
    <property type="term" value="P:'de novo' IMP biosynthetic process"/>
    <property type="evidence" value="ECO:0007669"/>
    <property type="project" value="UniProtKB-UniRule"/>
</dbReference>
<dbReference type="CDD" id="cd01421">
    <property type="entry name" value="IMPCH"/>
    <property type="match status" value="1"/>
</dbReference>
<dbReference type="FunFam" id="3.40.140.20:FF:000001">
    <property type="entry name" value="Bifunctional purine biosynthesis protein PurH"/>
    <property type="match status" value="1"/>
</dbReference>
<dbReference type="FunFam" id="3.40.140.20:FF:000002">
    <property type="entry name" value="Bifunctional purine biosynthesis protein PurH"/>
    <property type="match status" value="1"/>
</dbReference>
<dbReference type="FunFam" id="3.40.50.1380:FF:000001">
    <property type="entry name" value="Bifunctional purine biosynthesis protein PurH"/>
    <property type="match status" value="1"/>
</dbReference>
<dbReference type="Gene3D" id="3.40.140.20">
    <property type="match status" value="2"/>
</dbReference>
<dbReference type="Gene3D" id="3.40.50.1380">
    <property type="entry name" value="Methylglyoxal synthase-like domain"/>
    <property type="match status" value="1"/>
</dbReference>
<dbReference type="HAMAP" id="MF_00139">
    <property type="entry name" value="PurH"/>
    <property type="match status" value="1"/>
</dbReference>
<dbReference type="InterPro" id="IPR024051">
    <property type="entry name" value="AICAR_Tfase_dup_dom_sf"/>
</dbReference>
<dbReference type="InterPro" id="IPR016193">
    <property type="entry name" value="Cytidine_deaminase-like"/>
</dbReference>
<dbReference type="InterPro" id="IPR011607">
    <property type="entry name" value="MGS-like_dom"/>
</dbReference>
<dbReference type="InterPro" id="IPR036914">
    <property type="entry name" value="MGS-like_dom_sf"/>
</dbReference>
<dbReference type="InterPro" id="IPR002695">
    <property type="entry name" value="PurH-like"/>
</dbReference>
<dbReference type="NCBIfam" id="NF002049">
    <property type="entry name" value="PRK00881.1"/>
    <property type="match status" value="1"/>
</dbReference>
<dbReference type="NCBIfam" id="TIGR00355">
    <property type="entry name" value="purH"/>
    <property type="match status" value="1"/>
</dbReference>
<dbReference type="PANTHER" id="PTHR11692:SF0">
    <property type="entry name" value="BIFUNCTIONAL PURINE BIOSYNTHESIS PROTEIN ATIC"/>
    <property type="match status" value="1"/>
</dbReference>
<dbReference type="PANTHER" id="PTHR11692">
    <property type="entry name" value="BIFUNCTIONAL PURINE BIOSYNTHESIS PROTEIN PURH"/>
    <property type="match status" value="1"/>
</dbReference>
<dbReference type="Pfam" id="PF01808">
    <property type="entry name" value="AICARFT_IMPCHas"/>
    <property type="match status" value="1"/>
</dbReference>
<dbReference type="Pfam" id="PF02142">
    <property type="entry name" value="MGS"/>
    <property type="match status" value="1"/>
</dbReference>
<dbReference type="PIRSF" id="PIRSF000414">
    <property type="entry name" value="AICARFT_IMPCHas"/>
    <property type="match status" value="1"/>
</dbReference>
<dbReference type="SMART" id="SM00798">
    <property type="entry name" value="AICARFT_IMPCHas"/>
    <property type="match status" value="1"/>
</dbReference>
<dbReference type="SMART" id="SM00851">
    <property type="entry name" value="MGS"/>
    <property type="match status" value="1"/>
</dbReference>
<dbReference type="SUPFAM" id="SSF53927">
    <property type="entry name" value="Cytidine deaminase-like"/>
    <property type="match status" value="1"/>
</dbReference>
<dbReference type="SUPFAM" id="SSF52335">
    <property type="entry name" value="Methylglyoxal synthase-like"/>
    <property type="match status" value="1"/>
</dbReference>
<dbReference type="PROSITE" id="PS51855">
    <property type="entry name" value="MGS"/>
    <property type="match status" value="1"/>
</dbReference>
<reference key="1">
    <citation type="journal article" date="2002" name="Nature">
        <title>Comparison of the genomes of two Xanthomonas pathogens with differing host specificities.</title>
        <authorList>
            <person name="da Silva A.C.R."/>
            <person name="Ferro J.A."/>
            <person name="Reinach F.C."/>
            <person name="Farah C.S."/>
            <person name="Furlan L.R."/>
            <person name="Quaggio R.B."/>
            <person name="Monteiro-Vitorello C.B."/>
            <person name="Van Sluys M.A."/>
            <person name="Almeida N.F. Jr."/>
            <person name="Alves L.M.C."/>
            <person name="do Amaral A.M."/>
            <person name="Bertolini M.C."/>
            <person name="Camargo L.E.A."/>
            <person name="Camarotte G."/>
            <person name="Cannavan F."/>
            <person name="Cardozo J."/>
            <person name="Chambergo F."/>
            <person name="Ciapina L.P."/>
            <person name="Cicarelli R.M.B."/>
            <person name="Coutinho L.L."/>
            <person name="Cursino-Santos J.R."/>
            <person name="El-Dorry H."/>
            <person name="Faria J.B."/>
            <person name="Ferreira A.J.S."/>
            <person name="Ferreira R.C.C."/>
            <person name="Ferro M.I.T."/>
            <person name="Formighieri E.F."/>
            <person name="Franco M.C."/>
            <person name="Greggio C.C."/>
            <person name="Gruber A."/>
            <person name="Katsuyama A.M."/>
            <person name="Kishi L.T."/>
            <person name="Leite R.P."/>
            <person name="Lemos E.G.M."/>
            <person name="Lemos M.V.F."/>
            <person name="Locali E.C."/>
            <person name="Machado M.A."/>
            <person name="Madeira A.M.B.N."/>
            <person name="Martinez-Rossi N.M."/>
            <person name="Martins E.C."/>
            <person name="Meidanis J."/>
            <person name="Menck C.F.M."/>
            <person name="Miyaki C.Y."/>
            <person name="Moon D.H."/>
            <person name="Moreira L.M."/>
            <person name="Novo M.T.M."/>
            <person name="Okura V.K."/>
            <person name="Oliveira M.C."/>
            <person name="Oliveira V.R."/>
            <person name="Pereira H.A."/>
            <person name="Rossi A."/>
            <person name="Sena J.A.D."/>
            <person name="Silva C."/>
            <person name="de Souza R.F."/>
            <person name="Spinola L.A.F."/>
            <person name="Takita M.A."/>
            <person name="Tamura R.E."/>
            <person name="Teixeira E.C."/>
            <person name="Tezza R.I.D."/>
            <person name="Trindade dos Santos M."/>
            <person name="Truffi D."/>
            <person name="Tsai S.M."/>
            <person name="White F.F."/>
            <person name="Setubal J.C."/>
            <person name="Kitajima J.P."/>
        </authorList>
    </citation>
    <scope>NUCLEOTIDE SEQUENCE [LARGE SCALE GENOMIC DNA]</scope>
    <source>
        <strain>306</strain>
    </source>
</reference>
<sequence length="527" mass="55726">MASDFLPVRRALLSVSDKTGLIDLARALVARNVELLSTGGTAKAIREAGLPVKDVAELTGFPEMMDGRVKTLHPLVHGGLLGRAGVDEAVMAEHGIVPIDLLVLNLYPFESVTVKADCTLADAVENIDIGGPAMLRSAAKNFARVAVAADPAQYADLLVELEANDGQLSAAKRFALSVAAFNRVAQYDAAISNYLSAVADSAEAVPTRSPFPAQINSNFVKVMDLRYGENPHQSGAFYRDLYPVPGTLATFQQLQGKELSYNNLADADAAWECVRQFDAPACVIVKHANPCGVAVGAGCGDAYELAYATDPTSAFGGILAFNKTLDAATAKAILDRQFVEVLIAPDYEAGALEYATKKANVRVLKIPHGNGLNNYDTKRIGSGLLMQSADNRGMSQGELSVVTQRAPNEAELGDLLFAWRVAKYVKSNAIVYAKDNRTIGVGAGQMSRVVSAKIAALKAEEAKLTVAGSVMASDAFFPFRDGIDAAAAAGIKAVIQPGGSMRDGEVIAAADEHGIAMVFTGVRHFRH</sequence>
<feature type="chain" id="PRO_0000192149" description="Bifunctional purine biosynthesis protein PurH">
    <location>
        <begin position="1"/>
        <end position="527"/>
    </location>
</feature>
<feature type="domain" description="MGS-like" evidence="2">
    <location>
        <begin position="1"/>
        <end position="149"/>
    </location>
</feature>